<keyword id="KW-0963">Cytoplasm</keyword>
<keyword id="KW-0238">DNA-binding</keyword>
<keyword id="KW-0520">NAD</keyword>
<keyword id="KW-1185">Reference proteome</keyword>
<keyword id="KW-0678">Repressor</keyword>
<keyword id="KW-0804">Transcription</keyword>
<keyword id="KW-0805">Transcription regulation</keyword>
<name>REX_STAA8</name>
<evidence type="ECO:0000255" key="1">
    <source>
        <dbReference type="HAMAP-Rule" id="MF_01131"/>
    </source>
</evidence>
<proteinExistence type="inferred from homology"/>
<protein>
    <recommendedName>
        <fullName evidence="1">Redox-sensing transcriptional repressor Rex</fullName>
    </recommendedName>
</protein>
<dbReference type="EMBL" id="CP000253">
    <property type="protein sequence ID" value="ABD31311.1"/>
    <property type="molecule type" value="Genomic_DNA"/>
</dbReference>
<dbReference type="RefSeq" id="WP_001283612.1">
    <property type="nucleotide sequence ID" value="NZ_LS483365.1"/>
</dbReference>
<dbReference type="RefSeq" id="YP_500754.1">
    <property type="nucleotide sequence ID" value="NC_007795.1"/>
</dbReference>
<dbReference type="SMR" id="Q2FWL6"/>
<dbReference type="STRING" id="93061.SAOUHSC_02273"/>
<dbReference type="PaxDb" id="1280-SAXN108_2289"/>
<dbReference type="GeneID" id="3919148"/>
<dbReference type="KEGG" id="sao:SAOUHSC_02273"/>
<dbReference type="PATRIC" id="fig|93061.5.peg.2064"/>
<dbReference type="eggNOG" id="COG2344">
    <property type="taxonomic scope" value="Bacteria"/>
</dbReference>
<dbReference type="HOGENOM" id="CLU_061534_1_1_9"/>
<dbReference type="OrthoDB" id="9784760at2"/>
<dbReference type="PRO" id="PR:Q2FWL6"/>
<dbReference type="Proteomes" id="UP000008816">
    <property type="component" value="Chromosome"/>
</dbReference>
<dbReference type="GO" id="GO:0005737">
    <property type="term" value="C:cytoplasm"/>
    <property type="evidence" value="ECO:0007669"/>
    <property type="project" value="UniProtKB-SubCell"/>
</dbReference>
<dbReference type="GO" id="GO:0003677">
    <property type="term" value="F:DNA binding"/>
    <property type="evidence" value="ECO:0007669"/>
    <property type="project" value="UniProtKB-UniRule"/>
</dbReference>
<dbReference type="GO" id="GO:0003700">
    <property type="term" value="F:DNA-binding transcription factor activity"/>
    <property type="evidence" value="ECO:0007669"/>
    <property type="project" value="UniProtKB-UniRule"/>
</dbReference>
<dbReference type="GO" id="GO:0045892">
    <property type="term" value="P:negative regulation of DNA-templated transcription"/>
    <property type="evidence" value="ECO:0007669"/>
    <property type="project" value="InterPro"/>
</dbReference>
<dbReference type="GO" id="GO:0051775">
    <property type="term" value="P:response to redox state"/>
    <property type="evidence" value="ECO:0007669"/>
    <property type="project" value="InterPro"/>
</dbReference>
<dbReference type="Gene3D" id="3.40.50.720">
    <property type="entry name" value="NAD(P)-binding Rossmann-like Domain"/>
    <property type="match status" value="1"/>
</dbReference>
<dbReference type="Gene3D" id="1.10.10.10">
    <property type="entry name" value="Winged helix-like DNA-binding domain superfamily/Winged helix DNA-binding domain"/>
    <property type="match status" value="1"/>
</dbReference>
<dbReference type="HAMAP" id="MF_01131">
    <property type="entry name" value="Rex"/>
    <property type="match status" value="1"/>
</dbReference>
<dbReference type="InterPro" id="IPR003781">
    <property type="entry name" value="CoA-bd"/>
</dbReference>
<dbReference type="InterPro" id="IPR036291">
    <property type="entry name" value="NAD(P)-bd_dom_sf"/>
</dbReference>
<dbReference type="InterPro" id="IPR009718">
    <property type="entry name" value="Rex_DNA-bd_C_dom"/>
</dbReference>
<dbReference type="InterPro" id="IPR022876">
    <property type="entry name" value="Tscrpt_rep_Rex"/>
</dbReference>
<dbReference type="InterPro" id="IPR036388">
    <property type="entry name" value="WH-like_DNA-bd_sf"/>
</dbReference>
<dbReference type="InterPro" id="IPR036390">
    <property type="entry name" value="WH_DNA-bd_sf"/>
</dbReference>
<dbReference type="NCBIfam" id="NF003989">
    <property type="entry name" value="PRK05472.1-3"/>
    <property type="match status" value="1"/>
</dbReference>
<dbReference type="NCBIfam" id="NF003991">
    <property type="entry name" value="PRK05472.1-5"/>
    <property type="match status" value="1"/>
</dbReference>
<dbReference type="NCBIfam" id="NF003994">
    <property type="entry name" value="PRK05472.2-3"/>
    <property type="match status" value="1"/>
</dbReference>
<dbReference type="NCBIfam" id="NF003995">
    <property type="entry name" value="PRK05472.2-4"/>
    <property type="match status" value="1"/>
</dbReference>
<dbReference type="NCBIfam" id="NF003996">
    <property type="entry name" value="PRK05472.2-5"/>
    <property type="match status" value="1"/>
</dbReference>
<dbReference type="PANTHER" id="PTHR35786">
    <property type="entry name" value="REDOX-SENSING TRANSCRIPTIONAL REPRESSOR REX"/>
    <property type="match status" value="1"/>
</dbReference>
<dbReference type="PANTHER" id="PTHR35786:SF1">
    <property type="entry name" value="REDOX-SENSING TRANSCRIPTIONAL REPRESSOR REX 1"/>
    <property type="match status" value="1"/>
</dbReference>
<dbReference type="Pfam" id="PF02629">
    <property type="entry name" value="CoA_binding"/>
    <property type="match status" value="1"/>
</dbReference>
<dbReference type="Pfam" id="PF06971">
    <property type="entry name" value="Put_DNA-bind_N"/>
    <property type="match status" value="1"/>
</dbReference>
<dbReference type="SMART" id="SM00881">
    <property type="entry name" value="CoA_binding"/>
    <property type="match status" value="1"/>
</dbReference>
<dbReference type="SUPFAM" id="SSF51735">
    <property type="entry name" value="NAD(P)-binding Rossmann-fold domains"/>
    <property type="match status" value="1"/>
</dbReference>
<dbReference type="SUPFAM" id="SSF46785">
    <property type="entry name" value="Winged helix' DNA-binding domain"/>
    <property type="match status" value="1"/>
</dbReference>
<organism>
    <name type="scientific">Staphylococcus aureus (strain NCTC 8325 / PS 47)</name>
    <dbReference type="NCBI Taxonomy" id="93061"/>
    <lineage>
        <taxon>Bacteria</taxon>
        <taxon>Bacillati</taxon>
        <taxon>Bacillota</taxon>
        <taxon>Bacilli</taxon>
        <taxon>Bacillales</taxon>
        <taxon>Staphylococcaceae</taxon>
        <taxon>Staphylococcus</taxon>
    </lineage>
</organism>
<reference key="1">
    <citation type="book" date="2006" name="Gram positive pathogens, 2nd edition">
        <title>The Staphylococcus aureus NCTC 8325 genome.</title>
        <editorList>
            <person name="Fischetti V."/>
            <person name="Novick R."/>
            <person name="Ferretti J."/>
            <person name="Portnoy D."/>
            <person name="Rood J."/>
        </editorList>
        <authorList>
            <person name="Gillaspy A.F."/>
            <person name="Worrell V."/>
            <person name="Orvis J."/>
            <person name="Roe B.A."/>
            <person name="Dyer D.W."/>
            <person name="Iandolo J.J."/>
        </authorList>
    </citation>
    <scope>NUCLEOTIDE SEQUENCE [LARGE SCALE GENOMIC DNA]</scope>
    <source>
        <strain>NCTC 8325 / PS 47</strain>
    </source>
</reference>
<gene>
    <name evidence="1" type="primary">rex</name>
    <name type="ordered locus">SAOUHSC_02273</name>
</gene>
<comment type="function">
    <text evidence="1">Modulates transcription in response to changes in cellular NADH/NAD(+) redox state.</text>
</comment>
<comment type="subunit">
    <text evidence="1">Homodimer.</text>
</comment>
<comment type="subcellular location">
    <subcellularLocation>
        <location evidence="1">Cytoplasm</location>
    </subcellularLocation>
</comment>
<comment type="similarity">
    <text evidence="1">Belongs to the transcriptional regulatory Rex family.</text>
</comment>
<sequence length="211" mass="23599">MSDQVKIPRATLKRLPLYYRFVSSLKSKGIDRVNSKAISDALQIDSATIRRDFSYFGELGKKGYGYNIDSLLDFFKSELSESDMIKIAIVGVGNLGKALLTYNFSIHDDMTITEAFDVKEDVIGQKIGNVIVKDNDELITTLKKEEIDVVILTTPERVAQKVADELVQAGVKGILNFTPGRINTPSDVQVHQIDLGIELQSLLFFMKNYSE</sequence>
<accession>Q2FWL6</accession>
<feature type="chain" id="PRO_1000065417" description="Redox-sensing transcriptional repressor Rex">
    <location>
        <begin position="1"/>
        <end position="211"/>
    </location>
</feature>
<feature type="DNA-binding region" description="H-T-H motif" evidence="1">
    <location>
        <begin position="17"/>
        <end position="56"/>
    </location>
</feature>
<feature type="binding site" evidence="1">
    <location>
        <begin position="91"/>
        <end position="96"/>
    </location>
    <ligand>
        <name>NAD(+)</name>
        <dbReference type="ChEBI" id="CHEBI:57540"/>
    </ligand>
</feature>